<feature type="chain" id="PRO_0000379258" description="ATP-dependent helicase/nuclease subunit A">
    <location>
        <begin position="1"/>
        <end position="1235"/>
    </location>
</feature>
<feature type="domain" description="UvrD-like helicase ATP-binding" evidence="1">
    <location>
        <begin position="3"/>
        <end position="471"/>
    </location>
</feature>
<feature type="domain" description="UvrD-like helicase C-terminal" evidence="1">
    <location>
        <begin position="509"/>
        <end position="808"/>
    </location>
</feature>
<feature type="binding site" evidence="1">
    <location>
        <begin position="24"/>
        <end position="31"/>
    </location>
    <ligand>
        <name>ATP</name>
        <dbReference type="ChEBI" id="CHEBI:30616"/>
    </ligand>
</feature>
<gene>
    <name evidence="1" type="primary">addA</name>
    <name type="ordered locus">CKL_0706</name>
</gene>
<keyword id="KW-0067">ATP-binding</keyword>
<keyword id="KW-0227">DNA damage</keyword>
<keyword id="KW-0234">DNA repair</keyword>
<keyword id="KW-0238">DNA-binding</keyword>
<keyword id="KW-0269">Exonuclease</keyword>
<keyword id="KW-0347">Helicase</keyword>
<keyword id="KW-0378">Hydrolase</keyword>
<keyword id="KW-0413">Isomerase</keyword>
<keyword id="KW-0540">Nuclease</keyword>
<keyword id="KW-0547">Nucleotide-binding</keyword>
<keyword id="KW-1185">Reference proteome</keyword>
<name>ADDA_CLOK5</name>
<accession>A5N628</accession>
<dbReference type="EC" id="3.1.-.-" evidence="1"/>
<dbReference type="EC" id="5.6.2.4" evidence="1"/>
<dbReference type="EMBL" id="CP000673">
    <property type="protein sequence ID" value="EDK32759.1"/>
    <property type="molecule type" value="Genomic_DNA"/>
</dbReference>
<dbReference type="RefSeq" id="WP_011989274.1">
    <property type="nucleotide sequence ID" value="NC_009706.1"/>
</dbReference>
<dbReference type="SMR" id="A5N628"/>
<dbReference type="STRING" id="431943.CKL_0706"/>
<dbReference type="KEGG" id="ckl:CKL_0706"/>
<dbReference type="eggNOG" id="COG1074">
    <property type="taxonomic scope" value="Bacteria"/>
</dbReference>
<dbReference type="HOGENOM" id="CLU_001114_3_1_9"/>
<dbReference type="Proteomes" id="UP000002411">
    <property type="component" value="Chromosome"/>
</dbReference>
<dbReference type="GO" id="GO:0005829">
    <property type="term" value="C:cytosol"/>
    <property type="evidence" value="ECO:0007669"/>
    <property type="project" value="TreeGrafter"/>
</dbReference>
<dbReference type="GO" id="GO:0033202">
    <property type="term" value="C:DNA helicase complex"/>
    <property type="evidence" value="ECO:0007669"/>
    <property type="project" value="TreeGrafter"/>
</dbReference>
<dbReference type="GO" id="GO:0043138">
    <property type="term" value="F:3'-5' DNA helicase activity"/>
    <property type="evidence" value="ECO:0007669"/>
    <property type="project" value="UniProtKB-UniRule"/>
</dbReference>
<dbReference type="GO" id="GO:0008408">
    <property type="term" value="F:3'-5' exonuclease activity"/>
    <property type="evidence" value="ECO:0007669"/>
    <property type="project" value="UniProtKB-UniRule"/>
</dbReference>
<dbReference type="GO" id="GO:0005524">
    <property type="term" value="F:ATP binding"/>
    <property type="evidence" value="ECO:0007669"/>
    <property type="project" value="UniProtKB-UniRule"/>
</dbReference>
<dbReference type="GO" id="GO:0016887">
    <property type="term" value="F:ATP hydrolysis activity"/>
    <property type="evidence" value="ECO:0007669"/>
    <property type="project" value="RHEA"/>
</dbReference>
<dbReference type="GO" id="GO:0003690">
    <property type="term" value="F:double-stranded DNA binding"/>
    <property type="evidence" value="ECO:0007669"/>
    <property type="project" value="UniProtKB-UniRule"/>
</dbReference>
<dbReference type="GO" id="GO:0000724">
    <property type="term" value="P:double-strand break repair via homologous recombination"/>
    <property type="evidence" value="ECO:0007669"/>
    <property type="project" value="UniProtKB-UniRule"/>
</dbReference>
<dbReference type="FunFam" id="3.40.50.300:FF:001236">
    <property type="entry name" value="ATP-dependent helicase/nuclease subunit A"/>
    <property type="match status" value="1"/>
</dbReference>
<dbReference type="Gene3D" id="1.10.274.50">
    <property type="match status" value="1"/>
</dbReference>
<dbReference type="Gene3D" id="3.90.320.10">
    <property type="match status" value="1"/>
</dbReference>
<dbReference type="Gene3D" id="3.40.50.300">
    <property type="entry name" value="P-loop containing nucleotide triphosphate hydrolases"/>
    <property type="match status" value="4"/>
</dbReference>
<dbReference type="HAMAP" id="MF_01451">
    <property type="entry name" value="AddA"/>
    <property type="match status" value="1"/>
</dbReference>
<dbReference type="InterPro" id="IPR014152">
    <property type="entry name" value="AddA"/>
</dbReference>
<dbReference type="InterPro" id="IPR014017">
    <property type="entry name" value="DNA_helicase_UvrD-like_C"/>
</dbReference>
<dbReference type="InterPro" id="IPR000212">
    <property type="entry name" value="DNA_helicase_UvrD/REP"/>
</dbReference>
<dbReference type="InterPro" id="IPR027417">
    <property type="entry name" value="P-loop_NTPase"/>
</dbReference>
<dbReference type="InterPro" id="IPR011604">
    <property type="entry name" value="PDDEXK-like_dom_sf"/>
</dbReference>
<dbReference type="InterPro" id="IPR038726">
    <property type="entry name" value="PDDEXK_AddAB-type"/>
</dbReference>
<dbReference type="InterPro" id="IPR011335">
    <property type="entry name" value="Restrct_endonuc-II-like"/>
</dbReference>
<dbReference type="InterPro" id="IPR014016">
    <property type="entry name" value="UvrD-like_ATP-bd"/>
</dbReference>
<dbReference type="NCBIfam" id="TIGR02785">
    <property type="entry name" value="addA_Gpos"/>
    <property type="match status" value="1"/>
</dbReference>
<dbReference type="PANTHER" id="PTHR11070:SF48">
    <property type="entry name" value="ATP-DEPENDENT HELICASE_NUCLEASE SUBUNIT A"/>
    <property type="match status" value="1"/>
</dbReference>
<dbReference type="PANTHER" id="PTHR11070">
    <property type="entry name" value="UVRD / RECB / PCRA DNA HELICASE FAMILY MEMBER"/>
    <property type="match status" value="1"/>
</dbReference>
<dbReference type="Pfam" id="PF12705">
    <property type="entry name" value="PDDEXK_1"/>
    <property type="match status" value="1"/>
</dbReference>
<dbReference type="Pfam" id="PF00580">
    <property type="entry name" value="UvrD-helicase"/>
    <property type="match status" value="1"/>
</dbReference>
<dbReference type="Pfam" id="PF13361">
    <property type="entry name" value="UvrD_C"/>
    <property type="match status" value="1"/>
</dbReference>
<dbReference type="SUPFAM" id="SSF52540">
    <property type="entry name" value="P-loop containing nucleoside triphosphate hydrolases"/>
    <property type="match status" value="1"/>
</dbReference>
<dbReference type="SUPFAM" id="SSF52980">
    <property type="entry name" value="Restriction endonuclease-like"/>
    <property type="match status" value="1"/>
</dbReference>
<dbReference type="PROSITE" id="PS51198">
    <property type="entry name" value="UVRD_HELICASE_ATP_BIND"/>
    <property type="match status" value="1"/>
</dbReference>
<dbReference type="PROSITE" id="PS51217">
    <property type="entry name" value="UVRD_HELICASE_CTER"/>
    <property type="match status" value="1"/>
</dbReference>
<organism>
    <name type="scientific">Clostridium kluyveri (strain ATCC 8527 / DSM 555 / NBRC 12016 / NCIMB 10680 / K1)</name>
    <dbReference type="NCBI Taxonomy" id="431943"/>
    <lineage>
        <taxon>Bacteria</taxon>
        <taxon>Bacillati</taxon>
        <taxon>Bacillota</taxon>
        <taxon>Clostridia</taxon>
        <taxon>Eubacteriales</taxon>
        <taxon>Clostridiaceae</taxon>
        <taxon>Clostridium</taxon>
    </lineage>
</organism>
<protein>
    <recommendedName>
        <fullName evidence="1">ATP-dependent helicase/nuclease subunit A</fullName>
        <ecNumber evidence="1">3.1.-.-</ecNumber>
        <ecNumber evidence="1">5.6.2.4</ecNumber>
    </recommendedName>
    <alternativeName>
        <fullName evidence="1">ATP-dependent helicase/nuclease AddA</fullName>
    </alternativeName>
    <alternativeName>
        <fullName evidence="1">DNA 3'-5' helicase AddA</fullName>
    </alternativeName>
</protein>
<evidence type="ECO:0000255" key="1">
    <source>
        <dbReference type="HAMAP-Rule" id="MF_01451"/>
    </source>
</evidence>
<proteinExistence type="inferred from homology"/>
<comment type="function">
    <text evidence="1">The heterodimer acts as both an ATP-dependent DNA helicase and an ATP-dependent, dual-direction single-stranded exonuclease. Recognizes the chi site generating a DNA molecule suitable for the initiation of homologous recombination. The AddA nuclease domain is required for chi fragment generation; this subunit has the helicase and 3' -&gt; 5' nuclease activities.</text>
</comment>
<comment type="catalytic activity">
    <reaction evidence="1">
        <text>Couples ATP hydrolysis with the unwinding of duplex DNA by translocating in the 3'-5' direction.</text>
        <dbReference type="EC" id="5.6.2.4"/>
    </reaction>
</comment>
<comment type="catalytic activity">
    <reaction evidence="1">
        <text>ATP + H2O = ADP + phosphate + H(+)</text>
        <dbReference type="Rhea" id="RHEA:13065"/>
        <dbReference type="ChEBI" id="CHEBI:15377"/>
        <dbReference type="ChEBI" id="CHEBI:15378"/>
        <dbReference type="ChEBI" id="CHEBI:30616"/>
        <dbReference type="ChEBI" id="CHEBI:43474"/>
        <dbReference type="ChEBI" id="CHEBI:456216"/>
        <dbReference type="EC" id="5.6.2.4"/>
    </reaction>
</comment>
<comment type="cofactor">
    <cofactor evidence="1">
        <name>Mg(2+)</name>
        <dbReference type="ChEBI" id="CHEBI:18420"/>
    </cofactor>
</comment>
<comment type="subunit">
    <text evidence="1">Heterodimer of AddA and AddB/RexB.</text>
</comment>
<comment type="similarity">
    <text evidence="1">Belongs to the helicase family. AddA subfamily.</text>
</comment>
<sequence>MNTKWTETQKSAIFTPNCNLLVAAGAGTGKTAVLVERILQKVINDSEEVDIDKLLVVTFTNAAASEMKERVGEALSKLLELNCTSKNLQRQLALLNQSNIMTIHSFCLKVIKNNFHRIDLDPNFRICDDTESKLLKQDALLELFEEKYEEENLGFLNLADGYGGKNDSKLQDIVLSLYEFSQGSPWPKRWLQDVLKDFNLGSDFDFGDTKWAKVLMHNVTVELKGCKNKMKNILNTIENIEGLEHYLEPFKSDIESIDKLINITTWDEIRDEFIKLSFNKLPSKRTDPLVKSYKDKARNTRDEVKKKLISIREDIILCTDDIYENFKEVYPLMKSLTFLVMDFYEKYHNKKSERNMIDFNDIEHFCLEILTSKDKNGDIIPSEAALEYREYFEEIFIDEYQDSNEVQEVIMNMISRKNIYANLFMVGDVKQSIYRFRQARPELFLEKYNSYDEKEGSKNRKIKLSENFRSRKEIIDAINYIFKQIMCREVGELDYGEEECLKSSARYEPFEGNCGGDVELHVVDKKENENKLEDENEEELLDAISVEARLVASKINELVNPSLDQYSFKVYDKEIDNYRSIMYKDIVILMRATQNWAPAFVEELNNSGIPVFADTSVGYFQAIEIKTIISLLQIIDNPLQDIPFIALLRSPIGGFSPEDLIDLRVVNREISFYEILKAIKEHSLELKYSLEHIDERLEYKVEQFFNKLCLWRRKVIHMPIDEFIWHIYIETGYYGFVGAMPGGIQRQANLRMLFERAKQYKNISYKGLFNFINFINKLKSSSTDMGNAKILGENENVVRIMSIHKSKGLEFPVIILSGAGKRFNLTDINKSVLFHKELGLGPEYVNSERHISYPTIVKQVLKRKLKMETLSEEMRILYVAFTRAKEKLIITGTVDNIENTFQRWCEAAYCEEDKLPEYSLINSRNFLDWIGPAVARHPCGEIIRKVCPFEYNLNLITGDDSKWKVFVYSKDNFKSTLDENIDEDIIGKIKSLELDNNKEIYKNEVYRRLNWTYKYEQSSKIAAKFSVSELKRRFKLIDTENGIEFMEPIYLKKPAFLRESKGLTPSERGIVMHLVMQHIDIDKVGSYEQIKEQVDKLVFREFITEAEAKSISVYKIIKFFNSEIGIRMKKSNNVYREVPFYMEIESTELYKQLPQHIYRDEKVLIQGIIDCYFEENNELILVDYKTDHVGDIDSIKEKYQVQIYYYGRALEKLTGKKVKKKYLYLFSKDYILDLS</sequence>
<reference key="1">
    <citation type="journal article" date="2008" name="Proc. Natl. Acad. Sci. U.S.A.">
        <title>The genome of Clostridium kluyveri, a strict anaerobe with unique metabolic features.</title>
        <authorList>
            <person name="Seedorf H."/>
            <person name="Fricke W.F."/>
            <person name="Veith B."/>
            <person name="Brueggemann H."/>
            <person name="Liesegang H."/>
            <person name="Strittmatter A."/>
            <person name="Miethke M."/>
            <person name="Buckel W."/>
            <person name="Hinderberger J."/>
            <person name="Li F."/>
            <person name="Hagemeier C."/>
            <person name="Thauer R.K."/>
            <person name="Gottschalk G."/>
        </authorList>
    </citation>
    <scope>NUCLEOTIDE SEQUENCE [LARGE SCALE GENOMIC DNA]</scope>
    <source>
        <strain>ATCC 8527 / DSM 555 / NBRC 12016 / NCIMB 10680 / K1</strain>
    </source>
</reference>